<reference key="1">
    <citation type="journal article" date="1996" name="Nucleic Acids Res.">
        <title>Complete sequence analysis of the genome of the bacterium Mycoplasma pneumoniae.</title>
        <authorList>
            <person name="Himmelreich R."/>
            <person name="Hilbert H."/>
            <person name="Plagens H."/>
            <person name="Pirkl E."/>
            <person name="Li B.-C."/>
            <person name="Herrmann R."/>
        </authorList>
    </citation>
    <scope>NUCLEOTIDE SEQUENCE [LARGE SCALE GENOMIC DNA]</scope>
    <source>
        <strain>ATCC 29342 / M129 / Subtype 1</strain>
    </source>
</reference>
<gene>
    <name type="ordered locus">MPN_400</name>
    <name type="ORF">F11_orf582</name>
    <name type="ORF">MP438</name>
</gene>
<organism>
    <name type="scientific">Mycoplasma pneumoniae (strain ATCC 29342 / M129 / Subtype 1)</name>
    <name type="common">Mycoplasmoides pneumoniae</name>
    <dbReference type="NCBI Taxonomy" id="272634"/>
    <lineage>
        <taxon>Bacteria</taxon>
        <taxon>Bacillati</taxon>
        <taxon>Mycoplasmatota</taxon>
        <taxon>Mycoplasmoidales</taxon>
        <taxon>Mycoplasmoidaceae</taxon>
        <taxon>Mycoplasmoides</taxon>
    </lineage>
</organism>
<keyword id="KW-0472">Membrane</keyword>
<keyword id="KW-1185">Reference proteome</keyword>
<keyword id="KW-0812">Transmembrane</keyword>
<keyword id="KW-1133">Transmembrane helix</keyword>
<comment type="subcellular location">
    <subcellularLocation>
        <location evidence="2">Membrane</location>
        <topology evidence="2">Single-pass membrane protein</topology>
    </subcellularLocation>
</comment>
<feature type="chain" id="PRO_0000210509" description="Uncharacterized protein MG281 homolog">
    <location>
        <begin position="1"/>
        <end position="582"/>
    </location>
</feature>
<feature type="transmembrane region" description="Helical" evidence="1">
    <location>
        <begin position="20"/>
        <end position="40"/>
    </location>
</feature>
<name>Y400_MYCPN</name>
<accession>P75383</accession>
<dbReference type="EMBL" id="U00089">
    <property type="protein sequence ID" value="AAB96086.1"/>
    <property type="molecule type" value="Genomic_DNA"/>
</dbReference>
<dbReference type="PIR" id="S73764">
    <property type="entry name" value="S73764"/>
</dbReference>
<dbReference type="RefSeq" id="NP_110088.1">
    <property type="nucleotide sequence ID" value="NC_000912.1"/>
</dbReference>
<dbReference type="RefSeq" id="WP_010874756.1">
    <property type="nucleotide sequence ID" value="NZ_OU342337.1"/>
</dbReference>
<dbReference type="SMR" id="P75383"/>
<dbReference type="IntAct" id="P75383">
    <property type="interactions" value="1"/>
</dbReference>
<dbReference type="STRING" id="272634.MPN_400"/>
<dbReference type="EnsemblBacteria" id="AAB96086">
    <property type="protein sequence ID" value="AAB96086"/>
    <property type="gene ID" value="MPN_400"/>
</dbReference>
<dbReference type="KEGG" id="mpn:MPN_400"/>
<dbReference type="PATRIC" id="fig|272634.6.peg.431"/>
<dbReference type="HOGENOM" id="CLU_468358_0_0_14"/>
<dbReference type="OrthoDB" id="401414at2"/>
<dbReference type="BioCyc" id="MPNE272634:G1GJ3-634-MONOMER"/>
<dbReference type="Proteomes" id="UP000000808">
    <property type="component" value="Chromosome"/>
</dbReference>
<dbReference type="GO" id="GO:0016020">
    <property type="term" value="C:membrane"/>
    <property type="evidence" value="ECO:0007669"/>
    <property type="project" value="UniProtKB-SubCell"/>
</dbReference>
<dbReference type="Gene3D" id="2.160.20.180">
    <property type="match status" value="1"/>
</dbReference>
<dbReference type="Gene3D" id="3.30.110.180">
    <property type="match status" value="1"/>
</dbReference>
<dbReference type="Gene3D" id="3.30.1370.200">
    <property type="match status" value="1"/>
</dbReference>
<dbReference type="InterPro" id="IPR054348">
    <property type="entry name" value="M_C"/>
</dbReference>
<dbReference type="InterPro" id="IPR030943">
    <property type="entry name" value="M_MG281"/>
</dbReference>
<dbReference type="InterPro" id="IPR054349">
    <property type="entry name" value="M_smaller_dom"/>
</dbReference>
<dbReference type="InterPro" id="IPR048475">
    <property type="entry name" value="MG281-like_Ab-bd"/>
</dbReference>
<dbReference type="InterPro" id="IPR030942">
    <property type="entry name" value="Mycoplas_M_dom"/>
</dbReference>
<dbReference type="NCBIfam" id="TIGR04524">
    <property type="entry name" value="mycoplas_M_dom"/>
    <property type="match status" value="1"/>
</dbReference>
<dbReference type="NCBIfam" id="TIGR04525">
    <property type="entry name" value="prot_M_MG281"/>
    <property type="match status" value="1"/>
</dbReference>
<dbReference type="Pfam" id="PF22806">
    <property type="entry name" value="M_C"/>
    <property type="match status" value="1"/>
</dbReference>
<dbReference type="Pfam" id="PF20757">
    <property type="entry name" value="M_large_dom"/>
    <property type="match status" value="1"/>
</dbReference>
<dbReference type="Pfam" id="PF22805">
    <property type="entry name" value="M_smaller_dom"/>
    <property type="match status" value="1"/>
</dbReference>
<proteinExistence type="predicted"/>
<protein>
    <recommendedName>
        <fullName>Uncharacterized protein MG281 homolog</fullName>
    </recommendedName>
</protein>
<sequence>MKLNFKIKDKKTLKRLKKGGFWALGLFGAAINAFSAVLIVNEVLRLQSGETLIASGRSGNLSFQLYSKVNQNAKSKLNSISLTDGGYRSEIDLGDGSNFREDFRNFANNLSEAITDAPKDLLRPVPKVEVSGLIKTSSTFITPNFKAGYYDQVAADGKTLKYYQSTEYFNNRVVMPILQTTNGTLTANNRAYDDIFVDQGVPKFPGWFHDVDKAYYAGSNGQSEYLFKEWNYYVANGSPLYNVYPNHHFKQIKTIAFDAPRIKQGNTDGINLNLKQRNPDYVIINGLTGDGSTLKDLELPESVKKVSIYGDYHSINVAKQIFKNVLELEFYSTNQDNNFGFNPLVLGDHTNIIYDLFASKPFNYIDLTSLELKDNQDNIDASKLKRAVSDIYIRRRFERQMQGYWAGGYIDRYLVKNTNEKNVNKDNDTVYAALKDINLHLEETYTHGGNTMYRVNENYYPGASAYEAERATRDSEFQKEIVQRAELIGVVFEYGVKNLRPGLKYTVKFESPQEQVALKSTDKFQPVIGSVTDMSKSVTDLIGVLRDNAEILNITNVSKDETVVAELKEKLDRENVFQEIRT</sequence>
<evidence type="ECO:0000255" key="1"/>
<evidence type="ECO:0000305" key="2"/>